<evidence type="ECO:0000250" key="1">
    <source>
        <dbReference type="UniProtKB" id="B5HDJ6"/>
    </source>
</evidence>
<evidence type="ECO:0000250" key="2">
    <source>
        <dbReference type="UniProtKB" id="Q9UR08"/>
    </source>
</evidence>
<evidence type="ECO:0000269" key="3">
    <source>
    </source>
</evidence>
<evidence type="ECO:0000303" key="4">
    <source>
    </source>
</evidence>
<evidence type="ECO:0000305" key="5"/>
<evidence type="ECO:0000305" key="6">
    <source>
    </source>
</evidence>
<organism>
    <name type="scientific">Postia placenta (strain ATCC 44394 / Madison 698-R)</name>
    <name type="common">Brown rot fungus</name>
    <name type="synonym">Poria monticola</name>
    <dbReference type="NCBI Taxonomy" id="561896"/>
    <lineage>
        <taxon>Eukaryota</taxon>
        <taxon>Fungi</taxon>
        <taxon>Dikarya</taxon>
        <taxon>Basidiomycota</taxon>
        <taxon>Agaricomycotina</taxon>
        <taxon>Agaricomycetes</taxon>
        <taxon>Polyporales</taxon>
        <taxon>Adustoporiaceae</taxon>
        <taxon>Rhodonia</taxon>
    </lineage>
</organism>
<protein>
    <recommendedName>
        <fullName evidence="4">Sesquiterpene synthase 1</fullName>
        <ecNumber evidence="3">4.2.3.-</ecNumber>
        <ecNumber evidence="3">4.2.3.125</ecNumber>
        <ecNumber evidence="3">4.2.3.126</ecNumber>
        <ecNumber evidence="3">4.2.3.127</ecNumber>
        <ecNumber evidence="3">4.2.3.133</ecNumber>
    </recommendedName>
    <alternativeName>
        <fullName evidence="4">Terpene cyclase 1</fullName>
    </alternativeName>
</protein>
<dbReference type="EC" id="4.2.3.-" evidence="3"/>
<dbReference type="EC" id="4.2.3.125" evidence="3"/>
<dbReference type="EC" id="4.2.3.126" evidence="3"/>
<dbReference type="EC" id="4.2.3.127" evidence="3"/>
<dbReference type="EC" id="4.2.3.133" evidence="3"/>
<dbReference type="EMBL" id="LC378425">
    <property type="protein sequence ID" value="BBD74517.1"/>
    <property type="molecule type" value="mRNA"/>
</dbReference>
<dbReference type="SMR" id="A0A348B779"/>
<dbReference type="GO" id="GO:0102877">
    <property type="term" value="F:alpha-copaene synthase activity"/>
    <property type="evidence" value="ECO:0007669"/>
    <property type="project" value="UniProtKB-EC"/>
</dbReference>
<dbReference type="GO" id="GO:0046872">
    <property type="term" value="F:metal ion binding"/>
    <property type="evidence" value="ECO:0007669"/>
    <property type="project" value="UniProtKB-KW"/>
</dbReference>
<dbReference type="GO" id="GO:0010333">
    <property type="term" value="F:terpene synthase activity"/>
    <property type="evidence" value="ECO:0007669"/>
    <property type="project" value="InterPro"/>
</dbReference>
<dbReference type="GO" id="GO:0008299">
    <property type="term" value="P:isoprenoid biosynthetic process"/>
    <property type="evidence" value="ECO:0007669"/>
    <property type="project" value="UniProtKB-ARBA"/>
</dbReference>
<dbReference type="Gene3D" id="1.10.600.10">
    <property type="entry name" value="Farnesyl Diphosphate Synthase"/>
    <property type="match status" value="1"/>
</dbReference>
<dbReference type="InterPro" id="IPR008949">
    <property type="entry name" value="Isoprenoid_synthase_dom_sf"/>
</dbReference>
<dbReference type="InterPro" id="IPR034686">
    <property type="entry name" value="Terpene_cyclase-like_2"/>
</dbReference>
<dbReference type="PANTHER" id="PTHR35201:SF4">
    <property type="entry name" value="BETA-PINACENE SYNTHASE-RELATED"/>
    <property type="match status" value="1"/>
</dbReference>
<dbReference type="PANTHER" id="PTHR35201">
    <property type="entry name" value="TERPENE SYNTHASE"/>
    <property type="match status" value="1"/>
</dbReference>
<dbReference type="Pfam" id="PF19086">
    <property type="entry name" value="Terpene_syn_C_2"/>
    <property type="match status" value="1"/>
</dbReference>
<dbReference type="SFLD" id="SFLDS00005">
    <property type="entry name" value="Isoprenoid_Synthase_Type_I"/>
    <property type="match status" value="1"/>
</dbReference>
<dbReference type="SFLD" id="SFLDG01020">
    <property type="entry name" value="Terpene_Cyclase_Like_2"/>
    <property type="match status" value="1"/>
</dbReference>
<dbReference type="SUPFAM" id="SSF48576">
    <property type="entry name" value="Terpenoid synthases"/>
    <property type="match status" value="1"/>
</dbReference>
<gene>
    <name evidence="4" type="primary">STS-01</name>
</gene>
<sequence>MSSSAPSTSAPTKIVIPDLVSHCTIPVRCNRHWKQASVESKRWLFRGGNLSDRKRDAFHGLKAGYLTSMCYPLAGYPQLRVSCDFMNYLFHLDNISDEMNDRGTHGTAVSVLDALYQPHMHPTSRVGKMTKDYWVRLIQTASPGAQQRFIETFDMFFQAVTQQAMDRANGVIPDLESYIAIRRDTSGCKPCWALIEYANNLDLPWEIMDHPIIRGLGEAANDLVTWSNDIFSYNVEQSKGDTHNMIVVVQNQQGLDLQSAVNFVGDLCKQSIDRFHYLRENLPSWGPELDREVEIYVDGLADWITGSLKWSFESERYFGKAGLEVKKTRVVALLPRRA</sequence>
<keyword id="KW-0456">Lyase</keyword>
<keyword id="KW-0460">Magnesium</keyword>
<keyword id="KW-0479">Metal-binding</keyword>
<proteinExistence type="evidence at protein level"/>
<name>STS1_POSPM</name>
<feature type="chain" id="PRO_0000451386" description="Sesquiterpene synthase 1">
    <location>
        <begin position="1"/>
        <end position="338"/>
    </location>
</feature>
<feature type="short sequence motif" description="DDXXD motif" evidence="6">
    <location>
        <begin position="93"/>
        <end position="97"/>
    </location>
</feature>
<feature type="short sequence motif" description="NSE/DTE motif" evidence="6">
    <location>
        <begin position="228"/>
        <end position="236"/>
    </location>
</feature>
<feature type="binding site" evidence="2">
    <location>
        <position position="93"/>
    </location>
    <ligand>
        <name>Mg(2+)</name>
        <dbReference type="ChEBI" id="CHEBI:18420"/>
        <label>1</label>
    </ligand>
</feature>
<feature type="binding site" evidence="2">
    <location>
        <position position="93"/>
    </location>
    <ligand>
        <name>Mg(2+)</name>
        <dbReference type="ChEBI" id="CHEBI:18420"/>
        <label>2</label>
    </ligand>
</feature>
<feature type="binding site" evidence="2">
    <location>
        <position position="228"/>
    </location>
    <ligand>
        <name>Mg(2+)</name>
        <dbReference type="ChEBI" id="CHEBI:18420"/>
        <label>3</label>
    </ligand>
</feature>
<feature type="binding site" evidence="2">
    <location>
        <position position="232"/>
    </location>
    <ligand>
        <name>Mg(2+)</name>
        <dbReference type="ChEBI" id="CHEBI:18420"/>
        <label>3</label>
    </ligand>
</feature>
<feature type="binding site" evidence="2">
    <location>
        <position position="236"/>
    </location>
    <ligand>
        <name>Mg(2+)</name>
        <dbReference type="ChEBI" id="CHEBI:18420"/>
        <label>3</label>
    </ligand>
</feature>
<feature type="binding site" evidence="2">
    <location>
        <position position="316"/>
    </location>
    <ligand>
        <name>(2E,6E)-farnesyl diphosphate</name>
        <dbReference type="ChEBI" id="CHEBI:175763"/>
    </ligand>
</feature>
<feature type="binding site" evidence="2">
    <location>
        <position position="317"/>
    </location>
    <ligand>
        <name>(2E,6E)-farnesyl diphosphate</name>
        <dbReference type="ChEBI" id="CHEBI:175763"/>
    </ligand>
</feature>
<feature type="site" description="Plays a critical role in the stabilization of intermediate cation" evidence="1">
    <location>
        <position position="90"/>
    </location>
</feature>
<accession>A0A348B779</accession>
<reference key="1">
    <citation type="journal article" date="2018" name="Microb. Biotechnol.">
        <title>Insight into metabolic diversity of the brown-rot basidiomycete Postia placenta responsible for sesquiterpene biosynthesis: semi-comprehensive screening of cytochrome P450 monooxygenase involved in protoilludene metabolism.</title>
        <authorList>
            <person name="Ichinose H."/>
            <person name="Kitaoka T."/>
        </authorList>
    </citation>
    <scope>NUCLEOTIDE SEQUENCE [MRNA]</scope>
    <scope>FUNCTION</scope>
    <scope>DOMAIN</scope>
    <scope>CATALYTIC ACTIVITY</scope>
    <source>
        <strain>ATCC 44394 / Madison 698-R</strain>
    </source>
</reference>
<comment type="function">
    <text evidence="3">Terpene cyclase that catalyzes the cyclization of farnesyl diphosphate (FPP) to various sesquiterpenes, including alpha-copaene, beta-copaene, beta-elemene, alpha-muurolene, gamma-muurolene and delta-cadinene.</text>
</comment>
<comment type="catalytic activity">
    <reaction evidence="3">
        <text>(2E,6E)-farnesyl diphosphate = alpha-copaene + diphosphate</text>
        <dbReference type="Rhea" id="RHEA:33991"/>
        <dbReference type="ChEBI" id="CHEBI:10221"/>
        <dbReference type="ChEBI" id="CHEBI:33019"/>
        <dbReference type="ChEBI" id="CHEBI:175763"/>
        <dbReference type="EC" id="4.2.3.133"/>
    </reaction>
    <physiologicalReaction direction="left-to-right" evidence="3">
        <dbReference type="Rhea" id="RHEA:33992"/>
    </physiologicalReaction>
</comment>
<comment type="catalytic activity">
    <reaction evidence="3">
        <text>(2E,6E)-farnesyl diphosphate = beta-copaene + diphosphate</text>
        <dbReference type="Rhea" id="RHEA:33111"/>
        <dbReference type="ChEBI" id="CHEBI:33019"/>
        <dbReference type="ChEBI" id="CHEBI:64799"/>
        <dbReference type="ChEBI" id="CHEBI:175763"/>
        <dbReference type="EC" id="4.2.3.127"/>
    </reaction>
    <physiologicalReaction direction="left-to-right" evidence="3">
        <dbReference type="Rhea" id="RHEA:33112"/>
    </physiologicalReaction>
</comment>
<comment type="catalytic activity">
    <reaction evidence="3">
        <text>(2E,6E)-farnesyl diphosphate = alpha-muurolene + diphosphate</text>
        <dbReference type="Rhea" id="RHEA:33103"/>
        <dbReference type="ChEBI" id="CHEBI:33019"/>
        <dbReference type="ChEBI" id="CHEBI:64797"/>
        <dbReference type="ChEBI" id="CHEBI:175763"/>
        <dbReference type="EC" id="4.2.3.125"/>
    </reaction>
    <physiologicalReaction direction="left-to-right" evidence="3">
        <dbReference type="Rhea" id="RHEA:33104"/>
    </physiologicalReaction>
</comment>
<comment type="catalytic activity">
    <reaction evidence="3">
        <text>(2E,6E)-farnesyl diphosphate = gamma-muurolene + diphosphate</text>
        <dbReference type="Rhea" id="RHEA:33107"/>
        <dbReference type="ChEBI" id="CHEBI:33019"/>
        <dbReference type="ChEBI" id="CHEBI:64798"/>
        <dbReference type="ChEBI" id="CHEBI:175763"/>
        <dbReference type="EC" id="4.2.3.126"/>
    </reaction>
    <physiologicalReaction direction="left-to-right" evidence="3">
        <dbReference type="Rhea" id="RHEA:33108"/>
    </physiologicalReaction>
</comment>
<comment type="catalytic activity">
    <reaction evidence="3">
        <text>(2E,6E)-farnesyl diphosphate = delta-cadinene + diphosphate</text>
        <dbReference type="Rhea" id="RHEA:56556"/>
        <dbReference type="ChEBI" id="CHEBI:33019"/>
        <dbReference type="ChEBI" id="CHEBI:140564"/>
        <dbReference type="ChEBI" id="CHEBI:175763"/>
    </reaction>
    <physiologicalReaction direction="left-to-right" evidence="3">
        <dbReference type="Rhea" id="RHEA:56557"/>
    </physiologicalReaction>
</comment>
<comment type="cofactor">
    <cofactor evidence="3">
        <name>Mg(2+)</name>
        <dbReference type="ChEBI" id="CHEBI:18420"/>
    </cofactor>
</comment>
<comment type="domain">
    <text evidence="6">The conserved DDXXD and NSE/DTE motifs are important for the catalytic activity, presumably through binding to Mg(2+).</text>
</comment>
<comment type="similarity">
    <text evidence="5">Belongs to the terpene synthase family.</text>
</comment>